<dbReference type="EMBL" id="CP000570">
    <property type="protein sequence ID" value="ABN83374.1"/>
    <property type="molecule type" value="Genomic_DNA"/>
</dbReference>
<dbReference type="RefSeq" id="WP_004538599.1">
    <property type="nucleotide sequence ID" value="NC_009074.1"/>
</dbReference>
<dbReference type="SMR" id="A3NF54"/>
<dbReference type="KEGG" id="bpd:BURPS668_3982"/>
<dbReference type="HOGENOM" id="CLU_007831_2_2_4"/>
<dbReference type="GO" id="GO:0005829">
    <property type="term" value="C:cytosol"/>
    <property type="evidence" value="ECO:0007669"/>
    <property type="project" value="TreeGrafter"/>
</dbReference>
<dbReference type="GO" id="GO:0050660">
    <property type="term" value="F:flavin adenine dinucleotide binding"/>
    <property type="evidence" value="ECO:0007669"/>
    <property type="project" value="UniProtKB-UniRule"/>
</dbReference>
<dbReference type="GO" id="GO:0030488">
    <property type="term" value="P:tRNA methylation"/>
    <property type="evidence" value="ECO:0007669"/>
    <property type="project" value="TreeGrafter"/>
</dbReference>
<dbReference type="GO" id="GO:0002098">
    <property type="term" value="P:tRNA wobble uridine modification"/>
    <property type="evidence" value="ECO:0007669"/>
    <property type="project" value="InterPro"/>
</dbReference>
<dbReference type="FunFam" id="1.10.10.1800:FF:000001">
    <property type="entry name" value="tRNA uridine 5-carboxymethylaminomethyl modification enzyme MnmG"/>
    <property type="match status" value="1"/>
</dbReference>
<dbReference type="FunFam" id="1.10.150.570:FF:000001">
    <property type="entry name" value="tRNA uridine 5-carboxymethylaminomethyl modification enzyme MnmG"/>
    <property type="match status" value="1"/>
</dbReference>
<dbReference type="FunFam" id="3.50.50.60:FF:000002">
    <property type="entry name" value="tRNA uridine 5-carboxymethylaminomethyl modification enzyme MnmG"/>
    <property type="match status" value="1"/>
</dbReference>
<dbReference type="FunFam" id="3.50.50.60:FF:000010">
    <property type="entry name" value="tRNA uridine 5-carboxymethylaminomethyl modification enzyme MnmG"/>
    <property type="match status" value="1"/>
</dbReference>
<dbReference type="Gene3D" id="3.50.50.60">
    <property type="entry name" value="FAD/NAD(P)-binding domain"/>
    <property type="match status" value="2"/>
</dbReference>
<dbReference type="Gene3D" id="1.10.150.570">
    <property type="entry name" value="GidA associated domain, C-terminal subdomain"/>
    <property type="match status" value="1"/>
</dbReference>
<dbReference type="Gene3D" id="1.10.10.1800">
    <property type="entry name" value="tRNA uridine 5-carboxymethylaminomethyl modification enzyme MnmG/GidA"/>
    <property type="match status" value="1"/>
</dbReference>
<dbReference type="HAMAP" id="MF_00129">
    <property type="entry name" value="MnmG_GidA"/>
    <property type="match status" value="1"/>
</dbReference>
<dbReference type="InterPro" id="IPR036188">
    <property type="entry name" value="FAD/NAD-bd_sf"/>
</dbReference>
<dbReference type="InterPro" id="IPR049312">
    <property type="entry name" value="GIDA_C_N"/>
</dbReference>
<dbReference type="InterPro" id="IPR004416">
    <property type="entry name" value="MnmG"/>
</dbReference>
<dbReference type="InterPro" id="IPR002218">
    <property type="entry name" value="MnmG-rel"/>
</dbReference>
<dbReference type="InterPro" id="IPR020595">
    <property type="entry name" value="MnmG-rel_CS"/>
</dbReference>
<dbReference type="InterPro" id="IPR026904">
    <property type="entry name" value="MnmG_C"/>
</dbReference>
<dbReference type="InterPro" id="IPR047001">
    <property type="entry name" value="MnmG_C_subdom"/>
</dbReference>
<dbReference type="InterPro" id="IPR044920">
    <property type="entry name" value="MnmG_C_subdom_sf"/>
</dbReference>
<dbReference type="InterPro" id="IPR040131">
    <property type="entry name" value="MnmG_N"/>
</dbReference>
<dbReference type="NCBIfam" id="TIGR00136">
    <property type="entry name" value="mnmG_gidA"/>
    <property type="match status" value="1"/>
</dbReference>
<dbReference type="PANTHER" id="PTHR11806">
    <property type="entry name" value="GLUCOSE INHIBITED DIVISION PROTEIN A"/>
    <property type="match status" value="1"/>
</dbReference>
<dbReference type="PANTHER" id="PTHR11806:SF0">
    <property type="entry name" value="PROTEIN MTO1 HOMOLOG, MITOCHONDRIAL"/>
    <property type="match status" value="1"/>
</dbReference>
<dbReference type="Pfam" id="PF01134">
    <property type="entry name" value="GIDA"/>
    <property type="match status" value="1"/>
</dbReference>
<dbReference type="Pfam" id="PF21680">
    <property type="entry name" value="GIDA_C_1st"/>
    <property type="match status" value="1"/>
</dbReference>
<dbReference type="Pfam" id="PF13932">
    <property type="entry name" value="SAM_GIDA_C"/>
    <property type="match status" value="1"/>
</dbReference>
<dbReference type="SMART" id="SM01228">
    <property type="entry name" value="GIDA_assoc_3"/>
    <property type="match status" value="1"/>
</dbReference>
<dbReference type="SUPFAM" id="SSF51905">
    <property type="entry name" value="FAD/NAD(P)-binding domain"/>
    <property type="match status" value="1"/>
</dbReference>
<dbReference type="PROSITE" id="PS01280">
    <property type="entry name" value="GIDA_1"/>
    <property type="match status" value="1"/>
</dbReference>
<dbReference type="PROSITE" id="PS01281">
    <property type="entry name" value="GIDA_2"/>
    <property type="match status" value="1"/>
</dbReference>
<organism>
    <name type="scientific">Burkholderia pseudomallei (strain 668)</name>
    <dbReference type="NCBI Taxonomy" id="320373"/>
    <lineage>
        <taxon>Bacteria</taxon>
        <taxon>Pseudomonadati</taxon>
        <taxon>Pseudomonadota</taxon>
        <taxon>Betaproteobacteria</taxon>
        <taxon>Burkholderiales</taxon>
        <taxon>Burkholderiaceae</taxon>
        <taxon>Burkholderia</taxon>
        <taxon>pseudomallei group</taxon>
    </lineage>
</organism>
<comment type="function">
    <text evidence="1">NAD-binding protein involved in the addition of a carboxymethylaminomethyl (cmnm) group at the wobble position (U34) of certain tRNAs, forming tRNA-cmnm(5)s(2)U34.</text>
</comment>
<comment type="cofactor">
    <cofactor evidence="1">
        <name>FAD</name>
        <dbReference type="ChEBI" id="CHEBI:57692"/>
    </cofactor>
</comment>
<comment type="subunit">
    <text evidence="1">Homodimer. Heterotetramer of two MnmE and two MnmG subunits.</text>
</comment>
<comment type="subcellular location">
    <subcellularLocation>
        <location evidence="1">Cytoplasm</location>
    </subcellularLocation>
</comment>
<comment type="similarity">
    <text evidence="1">Belongs to the MnmG family.</text>
</comment>
<sequence length="657" mass="72039">MLYPTEFDVIVVGGGHAGTEAALASARMGAKTLLLTHNIETLGQMSCNPSIGGIGKGHLVKEVDALGGAMAAATDEGGIQFRILNSSKGPAVRATRAQADRVLYKQAIRRRLENQPNLWLFQQAVDDLMVEGDRVVGAVTQVGVRFRARAVVLTAGTFLDGKIHVGLNHYTGGRAGDPAAVSLSSRLKELNLPQGRLKTGTPPRIDGRTIDFSKLDEQPGDLDPIPVFSFLGRAEQHPQQLPCWVTHTNERTHDIIRSGLDRSPMYTGVIEGVGPRYCPSIEDKIHRFASKDSHQIFLEPEGLTTNEFYPNGISTSLPFDVQLALVHSMRGLEQAHILRPGYAIEYDYFDPRALKSSLETKAIGGLFFAGQINGTTGYEEAAAQGLLAGINAGRYAQEKDAWCPRRDQAYLGVLVDDLVTRGVSEPYRMFTSRAEYRLSLREDNADMRLTEIGRELGVVDDVRWDAFNRKRDAVSRETERLRTTWVTPKTLPVDEATALLGKPIDHEYSLAELLRRPGVSYDGVCGLRGGECGPSEPLAEDELLLAQIKEQIEIGIKYQGYIERQAGEIERNGANENTRLPDGIDYTEVRGLSFEVSQKLNQFRPETIGQASRISGMTPAAISLLMVHLKKRGLGRRKGTDSVPGADVQADNTAAQQ</sequence>
<accession>A3NF54</accession>
<proteinExistence type="inferred from homology"/>
<reference key="1">
    <citation type="journal article" date="2010" name="Genome Biol. Evol.">
        <title>Continuing evolution of Burkholderia mallei through genome reduction and large-scale rearrangements.</title>
        <authorList>
            <person name="Losada L."/>
            <person name="Ronning C.M."/>
            <person name="DeShazer D."/>
            <person name="Woods D."/>
            <person name="Fedorova N."/>
            <person name="Kim H.S."/>
            <person name="Shabalina S.A."/>
            <person name="Pearson T.R."/>
            <person name="Brinkac L."/>
            <person name="Tan P."/>
            <person name="Nandi T."/>
            <person name="Crabtree J."/>
            <person name="Badger J."/>
            <person name="Beckstrom-Sternberg S."/>
            <person name="Saqib M."/>
            <person name="Schutzer S.E."/>
            <person name="Keim P."/>
            <person name="Nierman W.C."/>
        </authorList>
    </citation>
    <scope>NUCLEOTIDE SEQUENCE [LARGE SCALE GENOMIC DNA]</scope>
    <source>
        <strain>668</strain>
    </source>
</reference>
<gene>
    <name evidence="1" type="primary">mnmG</name>
    <name evidence="1" type="synonym">gidA</name>
    <name type="ordered locus">BURPS668_3982</name>
</gene>
<protein>
    <recommendedName>
        <fullName evidence="1">tRNA uridine 5-carboxymethylaminomethyl modification enzyme MnmG</fullName>
    </recommendedName>
    <alternativeName>
        <fullName evidence="1">Glucose-inhibited division protein A</fullName>
    </alternativeName>
</protein>
<feature type="chain" id="PRO_1000016568" description="tRNA uridine 5-carboxymethylaminomethyl modification enzyme MnmG">
    <location>
        <begin position="1"/>
        <end position="657"/>
    </location>
</feature>
<feature type="region of interest" description="Disordered" evidence="2">
    <location>
        <begin position="635"/>
        <end position="657"/>
    </location>
</feature>
<feature type="binding site" evidence="1">
    <location>
        <begin position="13"/>
        <end position="18"/>
    </location>
    <ligand>
        <name>FAD</name>
        <dbReference type="ChEBI" id="CHEBI:57692"/>
    </ligand>
</feature>
<feature type="binding site" evidence="1">
    <location>
        <begin position="274"/>
        <end position="288"/>
    </location>
    <ligand>
        <name>NAD(+)</name>
        <dbReference type="ChEBI" id="CHEBI:57540"/>
    </ligand>
</feature>
<name>MNMG_BURP6</name>
<keyword id="KW-0963">Cytoplasm</keyword>
<keyword id="KW-0274">FAD</keyword>
<keyword id="KW-0285">Flavoprotein</keyword>
<keyword id="KW-0520">NAD</keyword>
<keyword id="KW-0819">tRNA processing</keyword>
<evidence type="ECO:0000255" key="1">
    <source>
        <dbReference type="HAMAP-Rule" id="MF_00129"/>
    </source>
</evidence>
<evidence type="ECO:0000256" key="2">
    <source>
        <dbReference type="SAM" id="MobiDB-lite"/>
    </source>
</evidence>